<accession>O21408</accession>
<evidence type="ECO:0000250" key="1"/>
<evidence type="ECO:0000255" key="2"/>
<evidence type="ECO:0000305" key="3"/>
<comment type="function">
    <text evidence="1">Core subunit of the mitochondrial membrane respiratory chain NADH dehydrogenase (Complex I) that is believed to belong to the minimal assembly required for catalysis. Complex I functions in the transfer of electrons from NADH to the respiratory chain. The immediate electron acceptor for the enzyme is believed to be ubiquinone (By similarity).</text>
</comment>
<comment type="catalytic activity">
    <reaction>
        <text>a ubiquinone + NADH + 5 H(+)(in) = a ubiquinol + NAD(+) + 4 H(+)(out)</text>
        <dbReference type="Rhea" id="RHEA:29091"/>
        <dbReference type="Rhea" id="RHEA-COMP:9565"/>
        <dbReference type="Rhea" id="RHEA-COMP:9566"/>
        <dbReference type="ChEBI" id="CHEBI:15378"/>
        <dbReference type="ChEBI" id="CHEBI:16389"/>
        <dbReference type="ChEBI" id="CHEBI:17976"/>
        <dbReference type="ChEBI" id="CHEBI:57540"/>
        <dbReference type="ChEBI" id="CHEBI:57945"/>
        <dbReference type="EC" id="7.1.1.2"/>
    </reaction>
</comment>
<comment type="subcellular location">
    <subcellularLocation>
        <location evidence="1">Mitochondrion inner membrane</location>
        <topology evidence="1">Multi-pass membrane protein</topology>
    </subcellularLocation>
</comment>
<comment type="similarity">
    <text evidence="3">Belongs to the complex I subunit 1 family.</text>
</comment>
<sequence>MLQTTLLYLINPLAYIIPILLATAFLTLIERKILGYMQFRKGPNIVGPYGLLQPIADGLKLFIKEPIRPSASSRSYFLATPTVALALALLMWMPLPLPHSIINLNLGLLFILAISSLTVYTILGSGWASNSKYALMGALRAVAQTISYEVSLGLILLSMIIFAGGFTLHTFNLAQETIWLLIPGWPLAFMWYISTLAETNRAPFDLTEGESELVSGFNIEYAAGPFALFFLAEYTNILLMNTLSVILFMGTSYNPLMPQISSLSLMMKASMLTVLFLWIRASYPRFRYDQLMHLVWKNFLPLTLAIILWHMALPLATTSLPPLT</sequence>
<gene>
    <name type="primary">MT-ND1</name>
    <name type="synonym">MTND1</name>
    <name type="synonym">NADH1</name>
    <name type="synonym">ND1</name>
</gene>
<name>NU1M_SCYCA</name>
<geneLocation type="mitochondrion"/>
<organism>
    <name type="scientific">Scyliorhinus canicula</name>
    <name type="common">Small-spotted catshark</name>
    <name type="synonym">Squalus canicula</name>
    <dbReference type="NCBI Taxonomy" id="7830"/>
    <lineage>
        <taxon>Eukaryota</taxon>
        <taxon>Metazoa</taxon>
        <taxon>Chordata</taxon>
        <taxon>Craniata</taxon>
        <taxon>Vertebrata</taxon>
        <taxon>Chondrichthyes</taxon>
        <taxon>Elasmobranchii</taxon>
        <taxon>Galeomorphii</taxon>
        <taxon>Galeoidea</taxon>
        <taxon>Carcharhiniformes</taxon>
        <taxon>Scyliorhinidae</taxon>
        <taxon>Scyliorhinus</taxon>
    </lineage>
</organism>
<keyword id="KW-0249">Electron transport</keyword>
<keyword id="KW-0472">Membrane</keyword>
<keyword id="KW-0496">Mitochondrion</keyword>
<keyword id="KW-0999">Mitochondrion inner membrane</keyword>
<keyword id="KW-0520">NAD</keyword>
<keyword id="KW-0679">Respiratory chain</keyword>
<keyword id="KW-1278">Translocase</keyword>
<keyword id="KW-0812">Transmembrane</keyword>
<keyword id="KW-1133">Transmembrane helix</keyword>
<keyword id="KW-0813">Transport</keyword>
<keyword id="KW-0830">Ubiquinone</keyword>
<dbReference type="EC" id="7.1.1.2"/>
<dbReference type="EMBL" id="Y09526">
    <property type="protein sequence ID" value="CAA70713.1"/>
    <property type="molecule type" value="Genomic_DNA"/>
</dbReference>
<dbReference type="EMBL" id="Y16067">
    <property type="protein sequence ID" value="CAA76019.1"/>
    <property type="molecule type" value="Genomic_DNA"/>
</dbReference>
<dbReference type="PIR" id="T11300">
    <property type="entry name" value="T11300"/>
</dbReference>
<dbReference type="RefSeq" id="NP_007614.1">
    <property type="nucleotide sequence ID" value="NC_001950.1"/>
</dbReference>
<dbReference type="SMR" id="O21408"/>
<dbReference type="GeneID" id="808294"/>
<dbReference type="CTD" id="4535"/>
<dbReference type="OrthoDB" id="531329at2759"/>
<dbReference type="GO" id="GO:0005743">
    <property type="term" value="C:mitochondrial inner membrane"/>
    <property type="evidence" value="ECO:0007669"/>
    <property type="project" value="UniProtKB-SubCell"/>
</dbReference>
<dbReference type="GO" id="GO:0008137">
    <property type="term" value="F:NADH dehydrogenase (ubiquinone) activity"/>
    <property type="evidence" value="ECO:0007669"/>
    <property type="project" value="UniProtKB-EC"/>
</dbReference>
<dbReference type="GO" id="GO:0009060">
    <property type="term" value="P:aerobic respiration"/>
    <property type="evidence" value="ECO:0007669"/>
    <property type="project" value="TreeGrafter"/>
</dbReference>
<dbReference type="HAMAP" id="MF_01350">
    <property type="entry name" value="NDH1_NuoH"/>
    <property type="match status" value="1"/>
</dbReference>
<dbReference type="InterPro" id="IPR001694">
    <property type="entry name" value="NADH_UbQ_OxRdtase_su1/FPO"/>
</dbReference>
<dbReference type="InterPro" id="IPR018086">
    <property type="entry name" value="NADH_UbQ_OxRdtase_su1_CS"/>
</dbReference>
<dbReference type="PANTHER" id="PTHR11432">
    <property type="entry name" value="NADH DEHYDROGENASE SUBUNIT 1"/>
    <property type="match status" value="1"/>
</dbReference>
<dbReference type="PANTHER" id="PTHR11432:SF3">
    <property type="entry name" value="NADH-UBIQUINONE OXIDOREDUCTASE CHAIN 1"/>
    <property type="match status" value="1"/>
</dbReference>
<dbReference type="Pfam" id="PF00146">
    <property type="entry name" value="NADHdh"/>
    <property type="match status" value="1"/>
</dbReference>
<dbReference type="PROSITE" id="PS00667">
    <property type="entry name" value="COMPLEX1_ND1_1"/>
    <property type="match status" value="1"/>
</dbReference>
<dbReference type="PROSITE" id="PS00668">
    <property type="entry name" value="COMPLEX1_ND1_2"/>
    <property type="match status" value="1"/>
</dbReference>
<feature type="chain" id="PRO_0000117475" description="NADH-ubiquinone oxidoreductase chain 1">
    <location>
        <begin position="1"/>
        <end position="324"/>
    </location>
</feature>
<feature type="transmembrane region" description="Helical" evidence="2">
    <location>
        <begin position="9"/>
        <end position="29"/>
    </location>
</feature>
<feature type="transmembrane region" description="Helical" evidence="2">
    <location>
        <begin position="43"/>
        <end position="63"/>
    </location>
</feature>
<feature type="transmembrane region" description="Helical" evidence="2">
    <location>
        <begin position="77"/>
        <end position="97"/>
    </location>
</feature>
<feature type="transmembrane region" description="Helical" evidence="2">
    <location>
        <begin position="106"/>
        <end position="126"/>
    </location>
</feature>
<feature type="transmembrane region" description="Helical" evidence="2">
    <location>
        <begin position="146"/>
        <end position="166"/>
    </location>
</feature>
<feature type="transmembrane region" description="Helical" evidence="2">
    <location>
        <begin position="177"/>
        <end position="197"/>
    </location>
</feature>
<feature type="transmembrane region" description="Helical" evidence="2">
    <location>
        <begin position="228"/>
        <end position="248"/>
    </location>
</feature>
<feature type="transmembrane region" description="Helical" evidence="2">
    <location>
        <begin position="259"/>
        <end position="279"/>
    </location>
</feature>
<feature type="transmembrane region" description="Helical" evidence="2">
    <location>
        <begin position="299"/>
        <end position="319"/>
    </location>
</feature>
<reference key="1">
    <citation type="journal article" date="1997" name="Mol. Biol. Evol.">
        <title>The main features of the craniate mitochondrial DNA between the ND1 and the COI genes were established in the common ancestor with the lancelet.</title>
        <authorList>
            <person name="Delarbre C."/>
            <person name="Barriel V."/>
            <person name="Tillier S."/>
            <person name="Janvier P."/>
            <person name="Gachelin G."/>
        </authorList>
    </citation>
    <scope>NUCLEOTIDE SEQUENCE [GENOMIC DNA]</scope>
</reference>
<reference key="2">
    <citation type="journal article" date="1998" name="Genetics">
        <title>The complete nucleotide sequence of the mitochondrial DNA of the dogfish, Scyliorhinus canicula.</title>
        <authorList>
            <person name="Delarbre C."/>
            <person name="Spruyt N."/>
            <person name="Delmarre C."/>
            <person name="Gallut C."/>
            <person name="Barriel V."/>
            <person name="Janvier P."/>
            <person name="Laudet V."/>
            <person name="Gachelin G."/>
        </authorList>
    </citation>
    <scope>NUCLEOTIDE SEQUENCE [GENOMIC DNA]</scope>
    <source>
        <tissue>Muscle</tissue>
    </source>
</reference>
<proteinExistence type="inferred from homology"/>
<protein>
    <recommendedName>
        <fullName>NADH-ubiquinone oxidoreductase chain 1</fullName>
        <ecNumber>7.1.1.2</ecNumber>
    </recommendedName>
    <alternativeName>
        <fullName>NADH dehydrogenase subunit 1</fullName>
    </alternativeName>
</protein>